<reference key="1">
    <citation type="journal article" date="2009" name="Genome Biol.">
        <title>Genomic and genetic analyses of diversity and plant interactions of Pseudomonas fluorescens.</title>
        <authorList>
            <person name="Silby M.W."/>
            <person name="Cerdeno-Tarraga A.M."/>
            <person name="Vernikos G.S."/>
            <person name="Giddens S.R."/>
            <person name="Jackson R.W."/>
            <person name="Preston G.M."/>
            <person name="Zhang X.-X."/>
            <person name="Moon C.D."/>
            <person name="Gehrig S.M."/>
            <person name="Godfrey S.A.C."/>
            <person name="Knight C.G."/>
            <person name="Malone J.G."/>
            <person name="Robinson Z."/>
            <person name="Spiers A.J."/>
            <person name="Harris S."/>
            <person name="Challis G.L."/>
            <person name="Yaxley A.M."/>
            <person name="Harris D."/>
            <person name="Seeger K."/>
            <person name="Murphy L."/>
            <person name="Rutter S."/>
            <person name="Squares R."/>
            <person name="Quail M.A."/>
            <person name="Saunders E."/>
            <person name="Mavromatis K."/>
            <person name="Brettin T.S."/>
            <person name="Bentley S.D."/>
            <person name="Hothersall J."/>
            <person name="Stephens E."/>
            <person name="Thomas C.M."/>
            <person name="Parkhill J."/>
            <person name="Levy S.B."/>
            <person name="Rainey P.B."/>
            <person name="Thomson N.R."/>
        </authorList>
    </citation>
    <scope>NUCLEOTIDE SEQUENCE [LARGE SCALE GENOMIC DNA]</scope>
    <source>
        <strain>Pf0-1</strain>
    </source>
</reference>
<accession>Q3K5Z9</accession>
<keyword id="KW-0687">Ribonucleoprotein</keyword>
<keyword id="KW-0689">Ribosomal protein</keyword>
<keyword id="KW-0694">RNA-binding</keyword>
<keyword id="KW-0699">rRNA-binding</keyword>
<evidence type="ECO:0000255" key="1">
    <source>
        <dbReference type="HAMAP-Rule" id="MF_01326"/>
    </source>
</evidence>
<evidence type="ECO:0000305" key="2"/>
<organism>
    <name type="scientific">Pseudomonas fluorescens (strain Pf0-1)</name>
    <dbReference type="NCBI Taxonomy" id="205922"/>
    <lineage>
        <taxon>Bacteria</taxon>
        <taxon>Pseudomonadati</taxon>
        <taxon>Pseudomonadota</taxon>
        <taxon>Gammaproteobacteria</taxon>
        <taxon>Pseudomonadales</taxon>
        <taxon>Pseudomonadaceae</taxon>
        <taxon>Pseudomonas</taxon>
    </lineage>
</organism>
<comment type="function">
    <text evidence="1">One of two assembly initiator proteins, it binds directly to the 5'-end of the 23S rRNA, where it nucleates assembly of the 50S subunit.</text>
</comment>
<comment type="function">
    <text evidence="1">One of the proteins that surrounds the polypeptide exit tunnel on the outside of the subunit.</text>
</comment>
<comment type="subunit">
    <text evidence="1">Part of the 50S ribosomal subunit.</text>
</comment>
<comment type="similarity">
    <text evidence="1">Belongs to the universal ribosomal protein uL24 family.</text>
</comment>
<feature type="chain" id="PRO_0000241642" description="Large ribosomal subunit protein uL24">
    <location>
        <begin position="1"/>
        <end position="104"/>
    </location>
</feature>
<sequence length="104" mass="11344">MQKIRRDDEIIVIAGKDKGKRGKVLKVLADNRLVVGGLNLVKRHTKPNPMSGVQGGIVEKEAPLHASNVAIFNGETNKADRVGFKVEDGKKIRVFKSTQKAVDA</sequence>
<gene>
    <name evidence="1" type="primary">rplX</name>
    <name type="ordered locus">Pfl01_5068</name>
</gene>
<proteinExistence type="inferred from homology"/>
<dbReference type="EMBL" id="CP000094">
    <property type="protein sequence ID" value="ABA76805.1"/>
    <property type="molecule type" value="Genomic_DNA"/>
</dbReference>
<dbReference type="RefSeq" id="WP_003186046.1">
    <property type="nucleotide sequence ID" value="NC_007492.2"/>
</dbReference>
<dbReference type="SMR" id="Q3K5Z9"/>
<dbReference type="GeneID" id="93491403"/>
<dbReference type="KEGG" id="pfo:Pfl01_5068"/>
<dbReference type="eggNOG" id="COG0198">
    <property type="taxonomic scope" value="Bacteria"/>
</dbReference>
<dbReference type="HOGENOM" id="CLU_093315_2_2_6"/>
<dbReference type="Proteomes" id="UP000002704">
    <property type="component" value="Chromosome"/>
</dbReference>
<dbReference type="GO" id="GO:1990904">
    <property type="term" value="C:ribonucleoprotein complex"/>
    <property type="evidence" value="ECO:0007669"/>
    <property type="project" value="UniProtKB-KW"/>
</dbReference>
<dbReference type="GO" id="GO:0005840">
    <property type="term" value="C:ribosome"/>
    <property type="evidence" value="ECO:0007669"/>
    <property type="project" value="UniProtKB-KW"/>
</dbReference>
<dbReference type="GO" id="GO:0019843">
    <property type="term" value="F:rRNA binding"/>
    <property type="evidence" value="ECO:0007669"/>
    <property type="project" value="UniProtKB-UniRule"/>
</dbReference>
<dbReference type="GO" id="GO:0003735">
    <property type="term" value="F:structural constituent of ribosome"/>
    <property type="evidence" value="ECO:0007669"/>
    <property type="project" value="InterPro"/>
</dbReference>
<dbReference type="GO" id="GO:0006412">
    <property type="term" value="P:translation"/>
    <property type="evidence" value="ECO:0007669"/>
    <property type="project" value="UniProtKB-UniRule"/>
</dbReference>
<dbReference type="CDD" id="cd06089">
    <property type="entry name" value="KOW_RPL26"/>
    <property type="match status" value="1"/>
</dbReference>
<dbReference type="FunFam" id="2.30.30.30:FF:000004">
    <property type="entry name" value="50S ribosomal protein L24"/>
    <property type="match status" value="1"/>
</dbReference>
<dbReference type="Gene3D" id="2.30.30.30">
    <property type="match status" value="1"/>
</dbReference>
<dbReference type="HAMAP" id="MF_01326_B">
    <property type="entry name" value="Ribosomal_uL24_B"/>
    <property type="match status" value="1"/>
</dbReference>
<dbReference type="InterPro" id="IPR005824">
    <property type="entry name" value="KOW"/>
</dbReference>
<dbReference type="InterPro" id="IPR014722">
    <property type="entry name" value="Rib_uL2_dom2"/>
</dbReference>
<dbReference type="InterPro" id="IPR003256">
    <property type="entry name" value="Ribosomal_uL24"/>
</dbReference>
<dbReference type="InterPro" id="IPR005825">
    <property type="entry name" value="Ribosomal_uL24_CS"/>
</dbReference>
<dbReference type="InterPro" id="IPR041988">
    <property type="entry name" value="Ribosomal_uL24_KOW"/>
</dbReference>
<dbReference type="InterPro" id="IPR008991">
    <property type="entry name" value="Translation_prot_SH3-like_sf"/>
</dbReference>
<dbReference type="NCBIfam" id="TIGR01079">
    <property type="entry name" value="rplX_bact"/>
    <property type="match status" value="1"/>
</dbReference>
<dbReference type="PANTHER" id="PTHR12903">
    <property type="entry name" value="MITOCHONDRIAL RIBOSOMAL PROTEIN L24"/>
    <property type="match status" value="1"/>
</dbReference>
<dbReference type="Pfam" id="PF00467">
    <property type="entry name" value="KOW"/>
    <property type="match status" value="1"/>
</dbReference>
<dbReference type="Pfam" id="PF17136">
    <property type="entry name" value="ribosomal_L24"/>
    <property type="match status" value="1"/>
</dbReference>
<dbReference type="SMART" id="SM00739">
    <property type="entry name" value="KOW"/>
    <property type="match status" value="1"/>
</dbReference>
<dbReference type="SUPFAM" id="SSF50104">
    <property type="entry name" value="Translation proteins SH3-like domain"/>
    <property type="match status" value="1"/>
</dbReference>
<dbReference type="PROSITE" id="PS01108">
    <property type="entry name" value="RIBOSOMAL_L24"/>
    <property type="match status" value="1"/>
</dbReference>
<name>RL24_PSEPF</name>
<protein>
    <recommendedName>
        <fullName evidence="1">Large ribosomal subunit protein uL24</fullName>
    </recommendedName>
    <alternativeName>
        <fullName evidence="2">50S ribosomal protein L24</fullName>
    </alternativeName>
</protein>